<sequence length="129" mass="13931">MAKTPVRARKRVKKQIVDGVAHIHASFNNTIVTITDRQGNALAWATAGGSGFRGSRKSTPFAAQVAAERCAEMVKEFGLKNLEVMVKGPGPGRESTIRALNAAGFRITNITDVTPIPHNGCRPPKKRRV</sequence>
<accession>B8F6P8</accession>
<protein>
    <recommendedName>
        <fullName evidence="1">Small ribosomal subunit protein uS11</fullName>
    </recommendedName>
    <alternativeName>
        <fullName evidence="2">30S ribosomal protein S11</fullName>
    </alternativeName>
</protein>
<dbReference type="EMBL" id="CP001321">
    <property type="protein sequence ID" value="ACL33000.1"/>
    <property type="molecule type" value="Genomic_DNA"/>
</dbReference>
<dbReference type="RefSeq" id="WP_005711978.1">
    <property type="nucleotide sequence ID" value="NC_011852.1"/>
</dbReference>
<dbReference type="SMR" id="B8F6P8"/>
<dbReference type="STRING" id="557723.HAPS_1431"/>
<dbReference type="GeneID" id="66617796"/>
<dbReference type="KEGG" id="hap:HAPS_1431"/>
<dbReference type="HOGENOM" id="CLU_072439_5_0_6"/>
<dbReference type="Proteomes" id="UP000006743">
    <property type="component" value="Chromosome"/>
</dbReference>
<dbReference type="GO" id="GO:1990904">
    <property type="term" value="C:ribonucleoprotein complex"/>
    <property type="evidence" value="ECO:0007669"/>
    <property type="project" value="UniProtKB-KW"/>
</dbReference>
<dbReference type="GO" id="GO:0005840">
    <property type="term" value="C:ribosome"/>
    <property type="evidence" value="ECO:0007669"/>
    <property type="project" value="UniProtKB-KW"/>
</dbReference>
<dbReference type="GO" id="GO:0019843">
    <property type="term" value="F:rRNA binding"/>
    <property type="evidence" value="ECO:0007669"/>
    <property type="project" value="UniProtKB-UniRule"/>
</dbReference>
<dbReference type="GO" id="GO:0003735">
    <property type="term" value="F:structural constituent of ribosome"/>
    <property type="evidence" value="ECO:0007669"/>
    <property type="project" value="InterPro"/>
</dbReference>
<dbReference type="GO" id="GO:0006412">
    <property type="term" value="P:translation"/>
    <property type="evidence" value="ECO:0007669"/>
    <property type="project" value="UniProtKB-UniRule"/>
</dbReference>
<dbReference type="FunFam" id="3.30.420.80:FF:000001">
    <property type="entry name" value="30S ribosomal protein S11"/>
    <property type="match status" value="1"/>
</dbReference>
<dbReference type="Gene3D" id="3.30.420.80">
    <property type="entry name" value="Ribosomal protein S11"/>
    <property type="match status" value="1"/>
</dbReference>
<dbReference type="HAMAP" id="MF_01310">
    <property type="entry name" value="Ribosomal_uS11"/>
    <property type="match status" value="1"/>
</dbReference>
<dbReference type="InterPro" id="IPR001971">
    <property type="entry name" value="Ribosomal_uS11"/>
</dbReference>
<dbReference type="InterPro" id="IPR019981">
    <property type="entry name" value="Ribosomal_uS11_bac-type"/>
</dbReference>
<dbReference type="InterPro" id="IPR018102">
    <property type="entry name" value="Ribosomal_uS11_CS"/>
</dbReference>
<dbReference type="InterPro" id="IPR036967">
    <property type="entry name" value="Ribosomal_uS11_sf"/>
</dbReference>
<dbReference type="NCBIfam" id="NF003698">
    <property type="entry name" value="PRK05309.1"/>
    <property type="match status" value="1"/>
</dbReference>
<dbReference type="NCBIfam" id="TIGR03632">
    <property type="entry name" value="uS11_bact"/>
    <property type="match status" value="1"/>
</dbReference>
<dbReference type="PANTHER" id="PTHR11759">
    <property type="entry name" value="40S RIBOSOMAL PROTEIN S14/30S RIBOSOMAL PROTEIN S11"/>
    <property type="match status" value="1"/>
</dbReference>
<dbReference type="Pfam" id="PF00411">
    <property type="entry name" value="Ribosomal_S11"/>
    <property type="match status" value="1"/>
</dbReference>
<dbReference type="PIRSF" id="PIRSF002131">
    <property type="entry name" value="Ribosomal_S11"/>
    <property type="match status" value="1"/>
</dbReference>
<dbReference type="SUPFAM" id="SSF53137">
    <property type="entry name" value="Translational machinery components"/>
    <property type="match status" value="1"/>
</dbReference>
<dbReference type="PROSITE" id="PS00054">
    <property type="entry name" value="RIBOSOMAL_S11"/>
    <property type="match status" value="1"/>
</dbReference>
<reference key="1">
    <citation type="journal article" date="2009" name="J. Bacteriol.">
        <title>Complete genome sequence of Haemophilus parasuis SH0165.</title>
        <authorList>
            <person name="Yue M."/>
            <person name="Yang F."/>
            <person name="Yang J."/>
            <person name="Bei W."/>
            <person name="Cai X."/>
            <person name="Chen L."/>
            <person name="Dong J."/>
            <person name="Zhou R."/>
            <person name="Jin M."/>
            <person name="Jin Q."/>
            <person name="Chen H."/>
        </authorList>
    </citation>
    <scope>NUCLEOTIDE SEQUENCE [LARGE SCALE GENOMIC DNA]</scope>
    <source>
        <strain>SH0165</strain>
    </source>
</reference>
<gene>
    <name evidence="1" type="primary">rpsK</name>
    <name type="ordered locus">HAPS_1431</name>
</gene>
<keyword id="KW-1185">Reference proteome</keyword>
<keyword id="KW-0687">Ribonucleoprotein</keyword>
<keyword id="KW-0689">Ribosomal protein</keyword>
<keyword id="KW-0694">RNA-binding</keyword>
<keyword id="KW-0699">rRNA-binding</keyword>
<proteinExistence type="inferred from homology"/>
<feature type="chain" id="PRO_1000165550" description="Small ribosomal subunit protein uS11">
    <location>
        <begin position="1"/>
        <end position="129"/>
    </location>
</feature>
<name>RS11_GLAP5</name>
<evidence type="ECO:0000255" key="1">
    <source>
        <dbReference type="HAMAP-Rule" id="MF_01310"/>
    </source>
</evidence>
<evidence type="ECO:0000305" key="2"/>
<organism>
    <name type="scientific">Glaesserella parasuis serovar 5 (strain SH0165)</name>
    <name type="common">Haemophilus parasuis</name>
    <dbReference type="NCBI Taxonomy" id="557723"/>
    <lineage>
        <taxon>Bacteria</taxon>
        <taxon>Pseudomonadati</taxon>
        <taxon>Pseudomonadota</taxon>
        <taxon>Gammaproteobacteria</taxon>
        <taxon>Pasteurellales</taxon>
        <taxon>Pasteurellaceae</taxon>
        <taxon>Glaesserella</taxon>
    </lineage>
</organism>
<comment type="function">
    <text evidence="1">Located on the platform of the 30S subunit, it bridges several disparate RNA helices of the 16S rRNA. Forms part of the Shine-Dalgarno cleft in the 70S ribosome.</text>
</comment>
<comment type="subunit">
    <text evidence="1">Part of the 30S ribosomal subunit. Interacts with proteins S7 and S18. Binds to IF-3.</text>
</comment>
<comment type="similarity">
    <text evidence="1">Belongs to the universal ribosomal protein uS11 family.</text>
</comment>